<sequence length="220" mass="25709">MVENVTYSEDGQLLKLKWEDVYEQFKNLITFAARQQMENNGADTMMSRQDLEQEGLLKLYDCWEKWCFKENKQMDEFGPIFRKSLFRKVKQSGGTGRALGFVAIDDEDNPLENMLKDENTVDVVEKIHFSEGLEKLKETLESDIAKSLLEELINPSDQTIYNVLIDIERKKMLKSQGHRVNVPKDTTVRMKHIDQTLGISNKQYDSELKKFVKRLTIYTI</sequence>
<dbReference type="EMBL" id="V01375">
    <property type="protein sequence ID" value="CAA24664.1"/>
    <property type="molecule type" value="Genomic_DNA"/>
</dbReference>
<dbReference type="PIR" id="A03584">
    <property type="entry name" value="RGBPS1"/>
</dbReference>
<dbReference type="SMR" id="P03048"/>
<dbReference type="GO" id="GO:0003677">
    <property type="term" value="F:DNA binding"/>
    <property type="evidence" value="ECO:0007669"/>
    <property type="project" value="UniProtKB-KW"/>
</dbReference>
<dbReference type="GO" id="GO:0016987">
    <property type="term" value="F:sigma factor activity"/>
    <property type="evidence" value="ECO:0007669"/>
    <property type="project" value="UniProtKB-KW"/>
</dbReference>
<comment type="function">
    <text>Sigma factors are initiation factors that promote the attachment of RNA polymerase to specific initiation sites and are then released. This sigma factor is responsible for the expression of the phage middle genes.</text>
</comment>
<organismHost>
    <name type="scientific">Bacillus subtilis</name>
    <dbReference type="NCBI Taxonomy" id="1423"/>
</organismHost>
<name>RP28_BPSP1</name>
<organism>
    <name type="scientific">Bacillus phage SP01</name>
    <name type="common">Bacteriophage SP01</name>
    <dbReference type="NCBI Taxonomy" id="2884427"/>
    <lineage>
        <taxon>Viruses</taxon>
        <taxon>Duplodnaviria</taxon>
        <taxon>Heunggongvirae</taxon>
        <taxon>Uroviricota</taxon>
        <taxon>Caudoviricetes</taxon>
        <taxon>Herelleviridae</taxon>
        <taxon>Spounavirinae</taxon>
        <taxon>Okubovirus</taxon>
        <taxon>Okubovirus SPO1</taxon>
    </lineage>
</organism>
<gene>
    <name type="primary">28</name>
</gene>
<proteinExistence type="predicted"/>
<accession>P03048</accession>
<reference key="1">
    <citation type="journal article" date="1983" name="Proc. Natl. Acad. Sci. U.S.A.">
        <title>Structure of a Bacillus subtilis bacteriophage SPO1 gene encoding RNA polymerase sigma factor.</title>
        <authorList>
            <person name="Costanzo M."/>
            <person name="Pero J."/>
        </authorList>
    </citation>
    <scope>NUCLEOTIDE SEQUENCE [GENOMIC DNA]</scope>
</reference>
<feature type="chain" id="PRO_0000094025" description="RNA polymerase sigma GP28 factor">
    <location>
        <begin position="1"/>
        <end position="220"/>
    </location>
</feature>
<protein>
    <recommendedName>
        <fullName>RNA polymerase sigma GP28 factor</fullName>
    </recommendedName>
</protein>
<keyword id="KW-0238">DNA-binding</keyword>
<keyword id="KW-0731">Sigma factor</keyword>
<keyword id="KW-0804">Transcription</keyword>
<keyword id="KW-0805">Transcription regulation</keyword>